<organism>
    <name type="scientific">Aspergillus fumigatus (strain CBS 144.89 / FGSC A1163 / CEA10)</name>
    <name type="common">Neosartorya fumigata</name>
    <dbReference type="NCBI Taxonomy" id="451804"/>
    <lineage>
        <taxon>Eukaryota</taxon>
        <taxon>Fungi</taxon>
        <taxon>Dikarya</taxon>
        <taxon>Ascomycota</taxon>
        <taxon>Pezizomycotina</taxon>
        <taxon>Eurotiomycetes</taxon>
        <taxon>Eurotiomycetidae</taxon>
        <taxon>Eurotiales</taxon>
        <taxon>Aspergillaceae</taxon>
        <taxon>Aspergillus</taxon>
        <taxon>Aspergillus subgen. Fumigati</taxon>
    </lineage>
</organism>
<sequence>MMHIQTLRKITILDVQDKQRCLSTNQNVPDNVFQLIACWCYFPPFLSIAKIKPLIALKAGISENPVLIGCRRIKMAHCPYSEAMTRTTSVEDVKFEIPAWDNSNVDVADGSGRPESSTSGDTIRPKGRIRRSMTACNTCRKLKTRCDLDPRGHACRRCLSLRIECKLPETAERFQDNASMWSDATAAIPSIEERLISLERSMTEMTSMMRRMMDRSPSISGSSVSMLTRSGITDETASIEGSQSSSFAPRPIRLLQDLQSDFTGEANVLPADSRSLGDLFTKGIIDPKLSQKLIQLFVDHFGIWISVDNPSDIHNELRATDPLLYSTACLLASRYVPGIPLSVIHAMYLQIRHATVNVLWNKTPLKHETLQALALLALWPTAVQKETPMDSWLLSGISINHAIISFDFLNHAPSDLIVDNDMVAKLRVWNALCLTQLQSAIGNARPFHIQQRYLEHCPRLLEHPAATFEDGKIVAEIQLYLIALKLQNFSHRMRLGDFEYEEIERWKMEWAHLLKLSLWYCQLLLYRTAMRFHWESEHLISEILRNSRLILSKFLLVRFPNALAFPDQIYYIVGYAALNLCDFSPMDPLIDQVQTFLLHLSPNEDHIAYRFSYTITELKRRCATGPNPHNVVKGAFGDTRKLSMGQQIPFMNPLMDTMMGEYGGLEHLIPEVPPNSLPDMLTSVAGELQAFRTAIL</sequence>
<keyword id="KW-0238">DNA-binding</keyword>
<keyword id="KW-0479">Metal-binding</keyword>
<keyword id="KW-0539">Nucleus</keyword>
<keyword id="KW-0804">Transcription</keyword>
<keyword id="KW-0805">Transcription regulation</keyword>
<keyword id="KW-0862">Zinc</keyword>
<comment type="function">
    <text evidence="1">Transcription factor required for protein utilization and degradation. Regulates transcription of major secreted proteases including a serine alkaline protease (alk1), a metalloprotease (mep), an aspergillopepsin (pep1), a sedolisin (sed2) and two dipeptidyl-peptidases (dppIV and dppV) (By similarity).</text>
</comment>
<comment type="subcellular location">
    <subcellularLocation>
        <location evidence="2">Nucleus</location>
    </subcellularLocation>
</comment>
<comment type="similarity">
    <text evidence="4">Belongs to the prtT family.</text>
</comment>
<evidence type="ECO:0000250" key="1"/>
<evidence type="ECO:0000255" key="2">
    <source>
        <dbReference type="PROSITE-ProRule" id="PRU00227"/>
    </source>
</evidence>
<evidence type="ECO:0000256" key="3">
    <source>
        <dbReference type="SAM" id="MobiDB-lite"/>
    </source>
</evidence>
<evidence type="ECO:0000305" key="4"/>
<gene>
    <name type="primary">prtT</name>
    <name type="ORF">AFUB_067240</name>
</gene>
<feature type="chain" id="PRO_0000407031" description="Transcriptional activator of proteases prtT">
    <location>
        <begin position="1"/>
        <end position="696"/>
    </location>
</feature>
<feature type="DNA-binding region" description="Zn(2)-C6 fungal-type" evidence="2">
    <location>
        <begin position="136"/>
        <end position="165"/>
    </location>
</feature>
<feature type="region of interest" description="Disordered" evidence="3">
    <location>
        <begin position="106"/>
        <end position="126"/>
    </location>
</feature>
<reference key="1">
    <citation type="journal article" date="2008" name="PLoS Genet.">
        <title>Genomic islands in the pathogenic filamentous fungus Aspergillus fumigatus.</title>
        <authorList>
            <person name="Fedorova N.D."/>
            <person name="Khaldi N."/>
            <person name="Joardar V.S."/>
            <person name="Maiti R."/>
            <person name="Amedeo P."/>
            <person name="Anderson M.J."/>
            <person name="Crabtree J."/>
            <person name="Silva J.C."/>
            <person name="Badger J.H."/>
            <person name="Albarraq A."/>
            <person name="Angiuoli S."/>
            <person name="Bussey H."/>
            <person name="Bowyer P."/>
            <person name="Cotty P.J."/>
            <person name="Dyer P.S."/>
            <person name="Egan A."/>
            <person name="Galens K."/>
            <person name="Fraser-Liggett C.M."/>
            <person name="Haas B.J."/>
            <person name="Inman J.M."/>
            <person name="Kent R."/>
            <person name="Lemieux S."/>
            <person name="Malavazi I."/>
            <person name="Orvis J."/>
            <person name="Roemer T."/>
            <person name="Ronning C.M."/>
            <person name="Sundaram J.P."/>
            <person name="Sutton G."/>
            <person name="Turner G."/>
            <person name="Venter J.C."/>
            <person name="White O.R."/>
            <person name="Whitty B.R."/>
            <person name="Youngman P."/>
            <person name="Wolfe K.H."/>
            <person name="Goldman G.H."/>
            <person name="Wortman J.R."/>
            <person name="Jiang B."/>
            <person name="Denning D.W."/>
            <person name="Nierman W.C."/>
        </authorList>
    </citation>
    <scope>NUCLEOTIDE SEQUENCE [LARGE SCALE GENOMIC DNA]</scope>
    <source>
        <strain>CBS 144.89 / FGSC A1163 / CEA10</strain>
    </source>
</reference>
<name>PRTT_ASPFC</name>
<accession>B0Y6K1</accession>
<dbReference type="EMBL" id="DS499598">
    <property type="protein sequence ID" value="EDP50386.1"/>
    <property type="molecule type" value="Genomic_DNA"/>
</dbReference>
<dbReference type="EnsemblFungi" id="EDP50386">
    <property type="protein sequence ID" value="EDP50386"/>
    <property type="gene ID" value="AFUB_067240"/>
</dbReference>
<dbReference type="HOGENOM" id="CLU_030102_0_0_1"/>
<dbReference type="OrthoDB" id="54723at5052"/>
<dbReference type="PhylomeDB" id="B0Y6K1"/>
<dbReference type="Proteomes" id="UP000001699">
    <property type="component" value="Unassembled WGS sequence"/>
</dbReference>
<dbReference type="GO" id="GO:0005634">
    <property type="term" value="C:nucleus"/>
    <property type="evidence" value="ECO:0007669"/>
    <property type="project" value="UniProtKB-SubCell"/>
</dbReference>
<dbReference type="GO" id="GO:0000981">
    <property type="term" value="F:DNA-binding transcription factor activity, RNA polymerase II-specific"/>
    <property type="evidence" value="ECO:0007669"/>
    <property type="project" value="InterPro"/>
</dbReference>
<dbReference type="GO" id="GO:0000976">
    <property type="term" value="F:transcription cis-regulatory region binding"/>
    <property type="evidence" value="ECO:0007669"/>
    <property type="project" value="TreeGrafter"/>
</dbReference>
<dbReference type="GO" id="GO:0008270">
    <property type="term" value="F:zinc ion binding"/>
    <property type="evidence" value="ECO:0007669"/>
    <property type="project" value="InterPro"/>
</dbReference>
<dbReference type="CDD" id="cd00067">
    <property type="entry name" value="GAL4"/>
    <property type="match status" value="1"/>
</dbReference>
<dbReference type="FunFam" id="4.10.240.10:FF:000011">
    <property type="entry name" value="Transcriptional activator of proteases prtT"/>
    <property type="match status" value="1"/>
</dbReference>
<dbReference type="Gene3D" id="4.10.240.10">
    <property type="entry name" value="Zn(2)-C6 fungal-type DNA-binding domain"/>
    <property type="match status" value="1"/>
</dbReference>
<dbReference type="InterPro" id="IPR051089">
    <property type="entry name" value="prtT"/>
</dbReference>
<dbReference type="InterPro" id="IPR036864">
    <property type="entry name" value="Zn2-C6_fun-type_DNA-bd_sf"/>
</dbReference>
<dbReference type="InterPro" id="IPR001138">
    <property type="entry name" value="Zn2Cys6_DnaBD"/>
</dbReference>
<dbReference type="PANTHER" id="PTHR31845">
    <property type="entry name" value="FINGER DOMAIN PROTEIN, PUTATIVE-RELATED"/>
    <property type="match status" value="1"/>
</dbReference>
<dbReference type="PANTHER" id="PTHR31845:SF34">
    <property type="entry name" value="TRANSCRIPTIONAL ACTIVATOR OF PROTEASES PRTT"/>
    <property type="match status" value="1"/>
</dbReference>
<dbReference type="Pfam" id="PF00172">
    <property type="entry name" value="Zn_clus"/>
    <property type="match status" value="1"/>
</dbReference>
<dbReference type="SMART" id="SM00066">
    <property type="entry name" value="GAL4"/>
    <property type="match status" value="1"/>
</dbReference>
<dbReference type="SUPFAM" id="SSF57701">
    <property type="entry name" value="Zn2/Cys6 DNA-binding domain"/>
    <property type="match status" value="1"/>
</dbReference>
<dbReference type="PROSITE" id="PS00463">
    <property type="entry name" value="ZN2_CY6_FUNGAL_1"/>
    <property type="match status" value="1"/>
</dbReference>
<dbReference type="PROSITE" id="PS50048">
    <property type="entry name" value="ZN2_CY6_FUNGAL_2"/>
    <property type="match status" value="1"/>
</dbReference>
<proteinExistence type="inferred from homology"/>
<protein>
    <recommendedName>
        <fullName>Transcriptional activator of proteases prtT</fullName>
    </recommendedName>
    <alternativeName>
        <fullName>Zn(2)-C6 zinc finger-containing protein prtT</fullName>
    </alternativeName>
</protein>